<name>CALM_ASPOR</name>
<comment type="function">
    <text>Calmodulin mediates the control of a large number of enzymes, ion channels and other proteins by Ca(2+). Among the enzymes to be stimulated by the calmodulin-Ca(2+) complex are a number of protein kinases and phosphatases.</text>
</comment>
<comment type="miscellaneous">
    <text>This protein has four functional calcium-binding sites.</text>
</comment>
<comment type="similarity">
    <text evidence="3">Belongs to the calmodulin family.</text>
</comment>
<comment type="sequence caution" evidence="3">
    <conflict type="erroneous gene model prediction">
        <sequence resource="EMBL-CDS" id="BAE58300"/>
    </conflict>
</comment>
<keyword id="KW-0007">Acetylation</keyword>
<keyword id="KW-0106">Calcium</keyword>
<keyword id="KW-0479">Metal-binding</keyword>
<keyword id="KW-1185">Reference proteome</keyword>
<keyword id="KW-0677">Repeat</keyword>
<sequence>MADSLTEEQVSEYKEAFSLFDKDGDGQITTKELGTVMRSLGQNPSESELQDMINEVDADNNGTIDFPEFLTMMARKMKDTDSEEEIREAFKVFDRDNNGFISAAELRHVMTSIGEKLTDDEVDEMIREADQDGDGRIDYNEFVQLMMQK</sequence>
<dbReference type="EMBL" id="D44468">
    <property type="protein sequence ID" value="BAA07920.1"/>
    <property type="molecule type" value="Genomic_DNA"/>
</dbReference>
<dbReference type="EMBL" id="BA000050">
    <property type="protein sequence ID" value="BAE58300.1"/>
    <property type="status" value="ALT_SEQ"/>
    <property type="molecule type" value="Genomic_DNA"/>
</dbReference>
<dbReference type="PIR" id="JC4216">
    <property type="entry name" value="JC4216"/>
</dbReference>
<dbReference type="RefSeq" id="XP_001820302.2">
    <property type="nucleotide sequence ID" value="XM_001820250.2"/>
</dbReference>
<dbReference type="SMR" id="P60205"/>
<dbReference type="STRING" id="510516.P60205"/>
<dbReference type="VEuPathDB" id="FungiDB:AO090003001227"/>
<dbReference type="OMA" id="ARKMKEC"/>
<dbReference type="Proteomes" id="UP000006564">
    <property type="component" value="Chromosome 2"/>
</dbReference>
<dbReference type="GO" id="GO:0016460">
    <property type="term" value="C:myosin II complex"/>
    <property type="evidence" value="ECO:0007669"/>
    <property type="project" value="TreeGrafter"/>
</dbReference>
<dbReference type="GO" id="GO:0005509">
    <property type="term" value="F:calcium ion binding"/>
    <property type="evidence" value="ECO:0007669"/>
    <property type="project" value="InterPro"/>
</dbReference>
<dbReference type="CDD" id="cd00051">
    <property type="entry name" value="EFh"/>
    <property type="match status" value="1"/>
</dbReference>
<dbReference type="FunFam" id="1.10.238.10:FF:000058">
    <property type="entry name" value="Calmodulin"/>
    <property type="match status" value="1"/>
</dbReference>
<dbReference type="FunFam" id="1.10.238.10:FF:000257">
    <property type="entry name" value="Calmodulin"/>
    <property type="match status" value="1"/>
</dbReference>
<dbReference type="FunFam" id="1.10.238.10:FF:000027">
    <property type="entry name" value="Calmodulin (CaM)"/>
    <property type="match status" value="1"/>
</dbReference>
<dbReference type="Gene3D" id="1.10.238.10">
    <property type="entry name" value="EF-hand"/>
    <property type="match status" value="3"/>
</dbReference>
<dbReference type="InterPro" id="IPR050230">
    <property type="entry name" value="CALM/Myosin/TropC-like"/>
</dbReference>
<dbReference type="InterPro" id="IPR011992">
    <property type="entry name" value="EF-hand-dom_pair"/>
</dbReference>
<dbReference type="InterPro" id="IPR018247">
    <property type="entry name" value="EF_Hand_1_Ca_BS"/>
</dbReference>
<dbReference type="InterPro" id="IPR002048">
    <property type="entry name" value="EF_hand_dom"/>
</dbReference>
<dbReference type="PANTHER" id="PTHR23048:SF0">
    <property type="entry name" value="CALMODULIN LIKE 3"/>
    <property type="match status" value="1"/>
</dbReference>
<dbReference type="PANTHER" id="PTHR23048">
    <property type="entry name" value="MYOSIN LIGHT CHAIN 1, 3"/>
    <property type="match status" value="1"/>
</dbReference>
<dbReference type="Pfam" id="PF13499">
    <property type="entry name" value="EF-hand_7"/>
    <property type="match status" value="2"/>
</dbReference>
<dbReference type="PRINTS" id="PR00450">
    <property type="entry name" value="RECOVERIN"/>
</dbReference>
<dbReference type="SMART" id="SM00054">
    <property type="entry name" value="EFh"/>
    <property type="match status" value="4"/>
</dbReference>
<dbReference type="SMART" id="SM01184">
    <property type="entry name" value="efhand_Ca_insen"/>
    <property type="match status" value="1"/>
</dbReference>
<dbReference type="SUPFAM" id="SSF47473">
    <property type="entry name" value="EF-hand"/>
    <property type="match status" value="1"/>
</dbReference>
<dbReference type="PROSITE" id="PS00018">
    <property type="entry name" value="EF_HAND_1"/>
    <property type="match status" value="4"/>
</dbReference>
<dbReference type="PROSITE" id="PS50222">
    <property type="entry name" value="EF_HAND_2"/>
    <property type="match status" value="4"/>
</dbReference>
<protein>
    <recommendedName>
        <fullName>Calmodulin</fullName>
        <shortName>CaM</shortName>
    </recommendedName>
</protein>
<reference key="1">
    <citation type="journal article" date="1995" name="Biosci. Biotechnol. Biochem.">
        <title>Cloning and nucleotide sequence of the calmodulin-encoding gene (cmdA) from Aspergillus oryzae.</title>
        <authorList>
            <person name="Yasui K."/>
            <person name="Kitamoto K."/>
            <person name="Gomi K."/>
            <person name="Kumagai C."/>
            <person name="Ohya Y."/>
            <person name="Tamura G."/>
        </authorList>
    </citation>
    <scope>NUCLEOTIDE SEQUENCE [GENOMIC DNA]</scope>
    <source>
        <strain>ATCC 42149 / RIB 40</strain>
    </source>
</reference>
<reference key="2">
    <citation type="journal article" date="2005" name="Nature">
        <title>Genome sequencing and analysis of Aspergillus oryzae.</title>
        <authorList>
            <person name="Machida M."/>
            <person name="Asai K."/>
            <person name="Sano M."/>
            <person name="Tanaka T."/>
            <person name="Kumagai T."/>
            <person name="Terai G."/>
            <person name="Kusumoto K."/>
            <person name="Arima T."/>
            <person name="Akita O."/>
            <person name="Kashiwagi Y."/>
            <person name="Abe K."/>
            <person name="Gomi K."/>
            <person name="Horiuchi H."/>
            <person name="Kitamoto K."/>
            <person name="Kobayashi T."/>
            <person name="Takeuchi M."/>
            <person name="Denning D.W."/>
            <person name="Galagan J.E."/>
            <person name="Nierman W.C."/>
            <person name="Yu J."/>
            <person name="Archer D.B."/>
            <person name="Bennett J.W."/>
            <person name="Bhatnagar D."/>
            <person name="Cleveland T.E."/>
            <person name="Fedorova N.D."/>
            <person name="Gotoh O."/>
            <person name="Horikawa H."/>
            <person name="Hosoyama A."/>
            <person name="Ichinomiya M."/>
            <person name="Igarashi R."/>
            <person name="Iwashita K."/>
            <person name="Juvvadi P.R."/>
            <person name="Kato M."/>
            <person name="Kato Y."/>
            <person name="Kin T."/>
            <person name="Kokubun A."/>
            <person name="Maeda H."/>
            <person name="Maeyama N."/>
            <person name="Maruyama J."/>
            <person name="Nagasaki H."/>
            <person name="Nakajima T."/>
            <person name="Oda K."/>
            <person name="Okada K."/>
            <person name="Paulsen I."/>
            <person name="Sakamoto K."/>
            <person name="Sawano T."/>
            <person name="Takahashi M."/>
            <person name="Takase K."/>
            <person name="Terabayashi Y."/>
            <person name="Wortman J.R."/>
            <person name="Yamada O."/>
            <person name="Yamagata Y."/>
            <person name="Anazawa H."/>
            <person name="Hata Y."/>
            <person name="Koide Y."/>
            <person name="Komori T."/>
            <person name="Koyama Y."/>
            <person name="Minetoki T."/>
            <person name="Suharnan S."/>
            <person name="Tanaka A."/>
            <person name="Isono K."/>
            <person name="Kuhara S."/>
            <person name="Ogasawara N."/>
            <person name="Kikuchi H."/>
        </authorList>
    </citation>
    <scope>NUCLEOTIDE SEQUENCE [LARGE SCALE GENOMIC DNA]</scope>
    <source>
        <strain>ATCC 42149 / RIB 40</strain>
    </source>
</reference>
<accession>P60205</accession>
<accession>P19533</accession>
<accession>Q2UJG5</accession>
<evidence type="ECO:0000250" key="1"/>
<evidence type="ECO:0000255" key="2">
    <source>
        <dbReference type="PROSITE-ProRule" id="PRU00448"/>
    </source>
</evidence>
<evidence type="ECO:0000305" key="3"/>
<feature type="initiator methionine" description="Removed" evidence="1">
    <location>
        <position position="1"/>
    </location>
</feature>
<feature type="chain" id="PRO_0000198313" description="Calmodulin">
    <location>
        <begin position="2"/>
        <end position="149"/>
    </location>
</feature>
<feature type="domain" description="EF-hand 1" evidence="2">
    <location>
        <begin position="8"/>
        <end position="43"/>
    </location>
</feature>
<feature type="domain" description="EF-hand 2" evidence="2">
    <location>
        <begin position="44"/>
        <end position="79"/>
    </location>
</feature>
<feature type="domain" description="EF-hand 3" evidence="2">
    <location>
        <begin position="81"/>
        <end position="116"/>
    </location>
</feature>
<feature type="domain" description="EF-hand 4" evidence="2">
    <location>
        <begin position="117"/>
        <end position="149"/>
    </location>
</feature>
<feature type="binding site" evidence="2">
    <location>
        <position position="21"/>
    </location>
    <ligand>
        <name>Ca(2+)</name>
        <dbReference type="ChEBI" id="CHEBI:29108"/>
        <label>1</label>
    </ligand>
</feature>
<feature type="binding site" evidence="2">
    <location>
        <position position="23"/>
    </location>
    <ligand>
        <name>Ca(2+)</name>
        <dbReference type="ChEBI" id="CHEBI:29108"/>
        <label>1</label>
    </ligand>
</feature>
<feature type="binding site" evidence="2">
    <location>
        <position position="25"/>
    </location>
    <ligand>
        <name>Ca(2+)</name>
        <dbReference type="ChEBI" id="CHEBI:29108"/>
        <label>1</label>
    </ligand>
</feature>
<feature type="binding site" evidence="2">
    <location>
        <position position="27"/>
    </location>
    <ligand>
        <name>Ca(2+)</name>
        <dbReference type="ChEBI" id="CHEBI:29108"/>
        <label>1</label>
    </ligand>
</feature>
<feature type="binding site" evidence="2">
    <location>
        <position position="32"/>
    </location>
    <ligand>
        <name>Ca(2+)</name>
        <dbReference type="ChEBI" id="CHEBI:29108"/>
        <label>1</label>
    </ligand>
</feature>
<feature type="binding site" evidence="2">
    <location>
        <position position="57"/>
    </location>
    <ligand>
        <name>Ca(2+)</name>
        <dbReference type="ChEBI" id="CHEBI:29108"/>
        <label>2</label>
    </ligand>
</feature>
<feature type="binding site" evidence="2">
    <location>
        <position position="59"/>
    </location>
    <ligand>
        <name>Ca(2+)</name>
        <dbReference type="ChEBI" id="CHEBI:29108"/>
        <label>2</label>
    </ligand>
</feature>
<feature type="binding site" evidence="2">
    <location>
        <position position="61"/>
    </location>
    <ligand>
        <name>Ca(2+)</name>
        <dbReference type="ChEBI" id="CHEBI:29108"/>
        <label>2</label>
    </ligand>
</feature>
<feature type="binding site" evidence="2">
    <location>
        <position position="63"/>
    </location>
    <ligand>
        <name>Ca(2+)</name>
        <dbReference type="ChEBI" id="CHEBI:29108"/>
        <label>2</label>
    </ligand>
</feature>
<feature type="binding site" evidence="2">
    <location>
        <position position="68"/>
    </location>
    <ligand>
        <name>Ca(2+)</name>
        <dbReference type="ChEBI" id="CHEBI:29108"/>
        <label>2</label>
    </ligand>
</feature>
<feature type="binding site" evidence="2">
    <location>
        <position position="94"/>
    </location>
    <ligand>
        <name>Ca(2+)</name>
        <dbReference type="ChEBI" id="CHEBI:29108"/>
        <label>3</label>
    </ligand>
</feature>
<feature type="binding site" evidence="2">
    <location>
        <position position="96"/>
    </location>
    <ligand>
        <name>Ca(2+)</name>
        <dbReference type="ChEBI" id="CHEBI:29108"/>
        <label>3</label>
    </ligand>
</feature>
<feature type="binding site" evidence="2">
    <location>
        <position position="98"/>
    </location>
    <ligand>
        <name>Ca(2+)</name>
        <dbReference type="ChEBI" id="CHEBI:29108"/>
        <label>3</label>
    </ligand>
</feature>
<feature type="binding site" evidence="2">
    <location>
        <position position="105"/>
    </location>
    <ligand>
        <name>Ca(2+)</name>
        <dbReference type="ChEBI" id="CHEBI:29108"/>
        <label>3</label>
    </ligand>
</feature>
<feature type="binding site" evidence="2">
    <location>
        <position position="130"/>
    </location>
    <ligand>
        <name>Ca(2+)</name>
        <dbReference type="ChEBI" id="CHEBI:29108"/>
        <label>4</label>
    </ligand>
</feature>
<feature type="binding site" evidence="2">
    <location>
        <position position="132"/>
    </location>
    <ligand>
        <name>Ca(2+)</name>
        <dbReference type="ChEBI" id="CHEBI:29108"/>
        <label>4</label>
    </ligand>
</feature>
<feature type="binding site" evidence="2">
    <location>
        <position position="134"/>
    </location>
    <ligand>
        <name>Ca(2+)</name>
        <dbReference type="ChEBI" id="CHEBI:29108"/>
        <label>4</label>
    </ligand>
</feature>
<feature type="binding site" evidence="2">
    <location>
        <position position="136"/>
    </location>
    <ligand>
        <name>Ca(2+)</name>
        <dbReference type="ChEBI" id="CHEBI:29108"/>
        <label>4</label>
    </ligand>
</feature>
<feature type="binding site" evidence="2">
    <location>
        <position position="141"/>
    </location>
    <ligand>
        <name>Ca(2+)</name>
        <dbReference type="ChEBI" id="CHEBI:29108"/>
        <label>4</label>
    </ligand>
</feature>
<feature type="modified residue" description="N-acetylalanine" evidence="1">
    <location>
        <position position="2"/>
    </location>
</feature>
<gene>
    <name type="primary">cmdA</name>
    <name type="ORF">AO090003001227</name>
</gene>
<proteinExistence type="inferred from homology"/>
<organism>
    <name type="scientific">Aspergillus oryzae (strain ATCC 42149 / RIB 40)</name>
    <name type="common">Yellow koji mold</name>
    <dbReference type="NCBI Taxonomy" id="510516"/>
    <lineage>
        <taxon>Eukaryota</taxon>
        <taxon>Fungi</taxon>
        <taxon>Dikarya</taxon>
        <taxon>Ascomycota</taxon>
        <taxon>Pezizomycotina</taxon>
        <taxon>Eurotiomycetes</taxon>
        <taxon>Eurotiomycetidae</taxon>
        <taxon>Eurotiales</taxon>
        <taxon>Aspergillaceae</taxon>
        <taxon>Aspergillus</taxon>
        <taxon>Aspergillus subgen. Circumdati</taxon>
    </lineage>
</organism>